<comment type="function">
    <text evidence="1">NDH-1 shuttles electrons from NADH, via FMN and iron-sulfur (Fe-S) centers, to quinones in the respiratory chain. The immediate electron acceptor for the enzyme in this species is believed to be ubiquinone. Couples the redox reaction to proton translocation (for every two electrons transferred, four hydrogen ions are translocated across the cytoplasmic membrane), and thus conserves the redox energy in a proton gradient.</text>
</comment>
<comment type="catalytic activity">
    <reaction evidence="1">
        <text>a quinone + NADH + 5 H(+)(in) = a quinol + NAD(+) + 4 H(+)(out)</text>
        <dbReference type="Rhea" id="RHEA:57888"/>
        <dbReference type="ChEBI" id="CHEBI:15378"/>
        <dbReference type="ChEBI" id="CHEBI:24646"/>
        <dbReference type="ChEBI" id="CHEBI:57540"/>
        <dbReference type="ChEBI" id="CHEBI:57945"/>
        <dbReference type="ChEBI" id="CHEBI:132124"/>
    </reaction>
</comment>
<comment type="subunit">
    <text evidence="1">NDH-1 is composed of 14 different subunits. Subunits NuoA, H, J, K, L, M, N constitute the membrane sector of the complex.</text>
</comment>
<comment type="subcellular location">
    <subcellularLocation>
        <location evidence="1">Cell inner membrane</location>
        <topology evidence="1">Multi-pass membrane protein</topology>
    </subcellularLocation>
</comment>
<comment type="similarity">
    <text evidence="1">Belongs to the complex I subunit 4L family.</text>
</comment>
<dbReference type="EC" id="7.1.1.-" evidence="1"/>
<dbReference type="EMBL" id="CP001389">
    <property type="protein sequence ID" value="ACP25978.1"/>
    <property type="molecule type" value="Genomic_DNA"/>
</dbReference>
<dbReference type="RefSeq" id="WP_012708741.1">
    <property type="nucleotide sequence ID" value="NC_012587.1"/>
</dbReference>
<dbReference type="RefSeq" id="YP_002826731.1">
    <property type="nucleotide sequence ID" value="NC_012587.1"/>
</dbReference>
<dbReference type="SMR" id="C3MEY7"/>
<dbReference type="STRING" id="394.NGR_c22180"/>
<dbReference type="KEGG" id="rhi:NGR_c22180"/>
<dbReference type="PATRIC" id="fig|394.7.peg.5042"/>
<dbReference type="eggNOG" id="COG0713">
    <property type="taxonomic scope" value="Bacteria"/>
</dbReference>
<dbReference type="HOGENOM" id="CLU_144724_1_1_5"/>
<dbReference type="Proteomes" id="UP000001054">
    <property type="component" value="Chromosome"/>
</dbReference>
<dbReference type="GO" id="GO:0030964">
    <property type="term" value="C:NADH dehydrogenase complex"/>
    <property type="evidence" value="ECO:0007669"/>
    <property type="project" value="TreeGrafter"/>
</dbReference>
<dbReference type="GO" id="GO:0005886">
    <property type="term" value="C:plasma membrane"/>
    <property type="evidence" value="ECO:0007669"/>
    <property type="project" value="UniProtKB-SubCell"/>
</dbReference>
<dbReference type="GO" id="GO:0050136">
    <property type="term" value="F:NADH:ubiquinone reductase (non-electrogenic) activity"/>
    <property type="evidence" value="ECO:0007669"/>
    <property type="project" value="UniProtKB-UniRule"/>
</dbReference>
<dbReference type="GO" id="GO:0048038">
    <property type="term" value="F:quinone binding"/>
    <property type="evidence" value="ECO:0007669"/>
    <property type="project" value="UniProtKB-KW"/>
</dbReference>
<dbReference type="GO" id="GO:0042773">
    <property type="term" value="P:ATP synthesis coupled electron transport"/>
    <property type="evidence" value="ECO:0007669"/>
    <property type="project" value="InterPro"/>
</dbReference>
<dbReference type="FunFam" id="1.10.287.3510:FF:000001">
    <property type="entry name" value="NADH-quinone oxidoreductase subunit K"/>
    <property type="match status" value="1"/>
</dbReference>
<dbReference type="Gene3D" id="1.10.287.3510">
    <property type="match status" value="1"/>
</dbReference>
<dbReference type="HAMAP" id="MF_01456">
    <property type="entry name" value="NDH1_NuoK"/>
    <property type="match status" value="1"/>
</dbReference>
<dbReference type="InterPro" id="IPR001133">
    <property type="entry name" value="NADH_UbQ_OxRdtase_chain4L/K"/>
</dbReference>
<dbReference type="InterPro" id="IPR039428">
    <property type="entry name" value="NUOK/Mnh_C1-like"/>
</dbReference>
<dbReference type="NCBIfam" id="NF004320">
    <property type="entry name" value="PRK05715.1-2"/>
    <property type="match status" value="1"/>
</dbReference>
<dbReference type="NCBIfam" id="NF004321">
    <property type="entry name" value="PRK05715.1-3"/>
    <property type="match status" value="1"/>
</dbReference>
<dbReference type="NCBIfam" id="NF004323">
    <property type="entry name" value="PRK05715.1-5"/>
    <property type="match status" value="1"/>
</dbReference>
<dbReference type="PANTHER" id="PTHR11434:SF16">
    <property type="entry name" value="NADH-UBIQUINONE OXIDOREDUCTASE CHAIN 4L"/>
    <property type="match status" value="1"/>
</dbReference>
<dbReference type="PANTHER" id="PTHR11434">
    <property type="entry name" value="NADH-UBIQUINONE OXIDOREDUCTASE SUBUNIT ND4L"/>
    <property type="match status" value="1"/>
</dbReference>
<dbReference type="Pfam" id="PF00420">
    <property type="entry name" value="Oxidored_q2"/>
    <property type="match status" value="1"/>
</dbReference>
<reference key="1">
    <citation type="journal article" date="2009" name="Appl. Environ. Microbiol.">
        <title>Rhizobium sp. strain NGR234 possesses a remarkable number of secretion systems.</title>
        <authorList>
            <person name="Schmeisser C."/>
            <person name="Liesegang H."/>
            <person name="Krysciak D."/>
            <person name="Bakkou N."/>
            <person name="Le Quere A."/>
            <person name="Wollherr A."/>
            <person name="Heinemeyer I."/>
            <person name="Morgenstern B."/>
            <person name="Pommerening-Roeser A."/>
            <person name="Flores M."/>
            <person name="Palacios R."/>
            <person name="Brenner S."/>
            <person name="Gottschalk G."/>
            <person name="Schmitz R.A."/>
            <person name="Broughton W.J."/>
            <person name="Perret X."/>
            <person name="Strittmatter A.W."/>
            <person name="Streit W.R."/>
        </authorList>
    </citation>
    <scope>NUCLEOTIDE SEQUENCE [LARGE SCALE GENOMIC DNA]</scope>
    <source>
        <strain>NBRC 101917 / NGR234</strain>
    </source>
</reference>
<keyword id="KW-0997">Cell inner membrane</keyword>
<keyword id="KW-1003">Cell membrane</keyword>
<keyword id="KW-0472">Membrane</keyword>
<keyword id="KW-0520">NAD</keyword>
<keyword id="KW-0874">Quinone</keyword>
<keyword id="KW-1185">Reference proteome</keyword>
<keyword id="KW-1278">Translocase</keyword>
<keyword id="KW-0812">Transmembrane</keyword>
<keyword id="KW-1133">Transmembrane helix</keyword>
<keyword id="KW-0813">Transport</keyword>
<keyword id="KW-0830">Ubiquinone</keyword>
<organism>
    <name type="scientific">Sinorhizobium fredii (strain NBRC 101917 / NGR234)</name>
    <dbReference type="NCBI Taxonomy" id="394"/>
    <lineage>
        <taxon>Bacteria</taxon>
        <taxon>Pseudomonadati</taxon>
        <taxon>Pseudomonadota</taxon>
        <taxon>Alphaproteobacteria</taxon>
        <taxon>Hyphomicrobiales</taxon>
        <taxon>Rhizobiaceae</taxon>
        <taxon>Sinorhizobium/Ensifer group</taxon>
        <taxon>Sinorhizobium</taxon>
    </lineage>
</organism>
<evidence type="ECO:0000255" key="1">
    <source>
        <dbReference type="HAMAP-Rule" id="MF_01456"/>
    </source>
</evidence>
<proteinExistence type="inferred from homology"/>
<accession>C3MEY7</accession>
<feature type="chain" id="PRO_0000390197" description="NADH-quinone oxidoreductase subunit K 2">
    <location>
        <begin position="1"/>
        <end position="100"/>
    </location>
</feature>
<feature type="transmembrane region" description="Helical" evidence="1">
    <location>
        <begin position="4"/>
        <end position="24"/>
    </location>
</feature>
<feature type="transmembrane region" description="Helical" evidence="1">
    <location>
        <begin position="28"/>
        <end position="48"/>
    </location>
</feature>
<feature type="transmembrane region" description="Helical" evidence="1">
    <location>
        <begin position="60"/>
        <end position="80"/>
    </location>
</feature>
<protein>
    <recommendedName>
        <fullName evidence="1">NADH-quinone oxidoreductase subunit K 2</fullName>
        <ecNumber evidence="1">7.1.1.-</ecNumber>
    </recommendedName>
    <alternativeName>
        <fullName evidence="1">NADH dehydrogenase I subunit K 2</fullName>
    </alternativeName>
    <alternativeName>
        <fullName evidence="1">NDH-1 subunit K 2</fullName>
    </alternativeName>
</protein>
<name>NUOK2_SINFN</name>
<sequence length="100" mass="10915">MVPLWWHISLGVALFVIGAAGVLLRRNILVVLMSLELLLNSVNINFIAFGRYYADFRGQIFAIFVIAITAAEVAVALGILVALVRNKSTLKVDDVTVMKG</sequence>
<gene>
    <name evidence="1" type="primary">nuoK2</name>
    <name type="ordered locus">NGR_c22180</name>
</gene>